<feature type="transit peptide" description="Mitochondrion" evidence="2">
    <location>
        <begin position="1"/>
        <end position="112"/>
    </location>
</feature>
<feature type="chain" id="PRO_0000093470" description="ATP-dependent permease MDL1, mitochondrial">
    <location>
        <begin position="113"/>
        <end position="726"/>
    </location>
</feature>
<feature type="transmembrane region" description="Helical" evidence="4">
    <location>
        <begin position="158"/>
        <end position="178"/>
    </location>
</feature>
<feature type="transmembrane region" description="Helical" evidence="4">
    <location>
        <begin position="196"/>
        <end position="216"/>
    </location>
</feature>
<feature type="transmembrane region" description="Helical" evidence="4">
    <location>
        <begin position="306"/>
        <end position="326"/>
    </location>
</feature>
<feature type="transmembrane region" description="Helical" evidence="4">
    <location>
        <begin position="386"/>
        <end position="406"/>
    </location>
</feature>
<feature type="transmembrane region" description="Helical" evidence="4">
    <location>
        <begin position="423"/>
        <end position="443"/>
    </location>
</feature>
<feature type="domain" description="ABC transmembrane type-1" evidence="4">
    <location>
        <begin position="158"/>
        <end position="447"/>
    </location>
</feature>
<feature type="domain" description="ABC transporter" evidence="3">
    <location>
        <begin position="482"/>
        <end position="719"/>
    </location>
</feature>
<feature type="binding site" evidence="3">
    <location>
        <begin position="517"/>
        <end position="524"/>
    </location>
    <ligand>
        <name>ATP</name>
        <dbReference type="ChEBI" id="CHEBI:30616"/>
    </ligand>
</feature>
<feature type="glycosylation site" description="N-linked (GlcNAc...) asparagine" evidence="2">
    <location>
        <position position="66"/>
    </location>
</feature>
<feature type="glycosylation site" description="N-linked (GlcNAc...) asparagine" evidence="2">
    <location>
        <position position="113"/>
    </location>
</feature>
<feature type="glycosylation site" description="N-linked (GlcNAc...) asparagine" evidence="2">
    <location>
        <position position="132"/>
    </location>
</feature>
<feature type="glycosylation site" description="N-linked (GlcNAc...) asparagine" evidence="2">
    <location>
        <position position="502"/>
    </location>
</feature>
<feature type="glycosylation site" description="N-linked (GlcNAc...) asparagine" evidence="2">
    <location>
        <position position="584"/>
    </location>
</feature>
<feature type="glycosylation site" description="N-linked (GlcNAc...) asparagine" evidence="2">
    <location>
        <position position="598"/>
    </location>
</feature>
<feature type="glycosylation site" description="N-linked (GlcNAc...) asparagine" evidence="2">
    <location>
        <position position="668"/>
    </location>
</feature>
<gene>
    <name type="primary">mdl1</name>
    <name type="ORF">SPBC9B6.09c</name>
</gene>
<proteinExistence type="inferred from homology"/>
<dbReference type="EMBL" id="CU329671">
    <property type="protein sequence ID" value="CAB42370.1"/>
    <property type="molecule type" value="Genomic_DNA"/>
</dbReference>
<dbReference type="PIR" id="T40790">
    <property type="entry name" value="T40790"/>
</dbReference>
<dbReference type="RefSeq" id="NP_595751.1">
    <property type="nucleotide sequence ID" value="NM_001021651.2"/>
</dbReference>
<dbReference type="SMR" id="Q9Y7M7"/>
<dbReference type="BioGRID" id="277798">
    <property type="interactions" value="4"/>
</dbReference>
<dbReference type="FunCoup" id="Q9Y7M7">
    <property type="interactions" value="171"/>
</dbReference>
<dbReference type="STRING" id="284812.Q9Y7M7"/>
<dbReference type="GlyCosmos" id="Q9Y7M7">
    <property type="glycosylation" value="7 sites, No reported glycans"/>
</dbReference>
<dbReference type="PaxDb" id="4896-SPBC9B6.09c.1"/>
<dbReference type="EnsemblFungi" id="SPBC9B6.09c.1">
    <property type="protein sequence ID" value="SPBC9B6.09c.1:pep"/>
    <property type="gene ID" value="SPBC9B6.09c"/>
</dbReference>
<dbReference type="GeneID" id="2541285"/>
<dbReference type="KEGG" id="spo:2541285"/>
<dbReference type="PomBase" id="SPBC9B6.09c">
    <property type="gene designation" value="mdl1"/>
</dbReference>
<dbReference type="VEuPathDB" id="FungiDB:SPBC9B6.09c"/>
<dbReference type="eggNOG" id="KOG0058">
    <property type="taxonomic scope" value="Eukaryota"/>
</dbReference>
<dbReference type="HOGENOM" id="CLU_000604_84_3_1"/>
<dbReference type="InParanoid" id="Q9Y7M7"/>
<dbReference type="OMA" id="MYTGHTL"/>
<dbReference type="PhylomeDB" id="Q9Y7M7"/>
<dbReference type="Reactome" id="R-SPO-1369007">
    <property type="pathway name" value="Mitochondrial ABC transporters"/>
</dbReference>
<dbReference type="Reactome" id="R-SPO-159418">
    <property type="pathway name" value="Recycling of bile acids and salts"/>
</dbReference>
<dbReference type="Reactome" id="R-SPO-193368">
    <property type="pathway name" value="Synthesis of bile acids and bile salts via 7alpha-hydroxycholesterol"/>
</dbReference>
<dbReference type="Reactome" id="R-SPO-382556">
    <property type="pathway name" value="ABC-family proteins mediated transport"/>
</dbReference>
<dbReference type="Reactome" id="R-SPO-9754706">
    <property type="pathway name" value="Atorvastatin ADME"/>
</dbReference>
<dbReference type="Reactome" id="R-SPO-9757110">
    <property type="pathway name" value="Prednisone ADME"/>
</dbReference>
<dbReference type="PRO" id="PR:Q9Y7M7"/>
<dbReference type="Proteomes" id="UP000002485">
    <property type="component" value="Chromosome II"/>
</dbReference>
<dbReference type="GO" id="GO:0016020">
    <property type="term" value="C:membrane"/>
    <property type="evidence" value="ECO:0000318"/>
    <property type="project" value="GO_Central"/>
</dbReference>
<dbReference type="GO" id="GO:0005743">
    <property type="term" value="C:mitochondrial inner membrane"/>
    <property type="evidence" value="ECO:0000250"/>
    <property type="project" value="PomBase"/>
</dbReference>
<dbReference type="GO" id="GO:0005739">
    <property type="term" value="C:mitochondrion"/>
    <property type="evidence" value="ECO:0000314"/>
    <property type="project" value="PomBase"/>
</dbReference>
<dbReference type="GO" id="GO:0015421">
    <property type="term" value="F:ABC-type oligopeptide transporter activity"/>
    <property type="evidence" value="ECO:0000266"/>
    <property type="project" value="PomBase"/>
</dbReference>
<dbReference type="GO" id="GO:0005524">
    <property type="term" value="F:ATP binding"/>
    <property type="evidence" value="ECO:0007669"/>
    <property type="project" value="UniProtKB-KW"/>
</dbReference>
<dbReference type="GO" id="GO:0016887">
    <property type="term" value="F:ATP hydrolysis activity"/>
    <property type="evidence" value="ECO:0007669"/>
    <property type="project" value="InterPro"/>
</dbReference>
<dbReference type="GO" id="GO:0042626">
    <property type="term" value="F:ATPase-coupled transmembrane transporter activity"/>
    <property type="evidence" value="ECO:0000318"/>
    <property type="project" value="GO_Central"/>
</dbReference>
<dbReference type="GO" id="GO:0090374">
    <property type="term" value="P:oligopeptide export from mitochondrion"/>
    <property type="evidence" value="ECO:0000266"/>
    <property type="project" value="PomBase"/>
</dbReference>
<dbReference type="GO" id="GO:0055085">
    <property type="term" value="P:transmembrane transport"/>
    <property type="evidence" value="ECO:0000318"/>
    <property type="project" value="GO_Central"/>
</dbReference>
<dbReference type="CDD" id="cd18573">
    <property type="entry name" value="ABC_6TM_ABCB10_like"/>
    <property type="match status" value="1"/>
</dbReference>
<dbReference type="FunFam" id="3.40.50.300:FF:000836">
    <property type="entry name" value="ABC transporter B family member 25"/>
    <property type="match status" value="1"/>
</dbReference>
<dbReference type="FunFam" id="1.20.1560.10:FF:000085">
    <property type="entry name" value="Probable ATP-binding cassette (ABC) transporter"/>
    <property type="match status" value="1"/>
</dbReference>
<dbReference type="Gene3D" id="1.20.1560.10">
    <property type="entry name" value="ABC transporter type 1, transmembrane domain"/>
    <property type="match status" value="1"/>
</dbReference>
<dbReference type="Gene3D" id="3.40.50.300">
    <property type="entry name" value="P-loop containing nucleotide triphosphate hydrolases"/>
    <property type="match status" value="1"/>
</dbReference>
<dbReference type="InterPro" id="IPR003593">
    <property type="entry name" value="AAA+_ATPase"/>
</dbReference>
<dbReference type="InterPro" id="IPR011527">
    <property type="entry name" value="ABC1_TM_dom"/>
</dbReference>
<dbReference type="InterPro" id="IPR036640">
    <property type="entry name" value="ABC1_TM_sf"/>
</dbReference>
<dbReference type="InterPro" id="IPR003439">
    <property type="entry name" value="ABC_transporter-like_ATP-bd"/>
</dbReference>
<dbReference type="InterPro" id="IPR017871">
    <property type="entry name" value="ABC_transporter-like_CS"/>
</dbReference>
<dbReference type="InterPro" id="IPR027417">
    <property type="entry name" value="P-loop_NTPase"/>
</dbReference>
<dbReference type="InterPro" id="IPR039421">
    <property type="entry name" value="Type_1_exporter"/>
</dbReference>
<dbReference type="PANTHER" id="PTHR43394:SF1">
    <property type="entry name" value="ATP-BINDING CASSETTE SUB-FAMILY B MEMBER 10, MITOCHONDRIAL"/>
    <property type="match status" value="1"/>
</dbReference>
<dbReference type="PANTHER" id="PTHR43394">
    <property type="entry name" value="ATP-DEPENDENT PERMEASE MDL1, MITOCHONDRIAL"/>
    <property type="match status" value="1"/>
</dbReference>
<dbReference type="Pfam" id="PF00664">
    <property type="entry name" value="ABC_membrane"/>
    <property type="match status" value="1"/>
</dbReference>
<dbReference type="Pfam" id="PF00005">
    <property type="entry name" value="ABC_tran"/>
    <property type="match status" value="1"/>
</dbReference>
<dbReference type="PIRSF" id="PIRSF002773">
    <property type="entry name" value="ABC_prm/ATPase_B"/>
    <property type="match status" value="1"/>
</dbReference>
<dbReference type="SMART" id="SM00382">
    <property type="entry name" value="AAA"/>
    <property type="match status" value="1"/>
</dbReference>
<dbReference type="SUPFAM" id="SSF90123">
    <property type="entry name" value="ABC transporter transmembrane region"/>
    <property type="match status" value="1"/>
</dbReference>
<dbReference type="SUPFAM" id="SSF52540">
    <property type="entry name" value="P-loop containing nucleoside triphosphate hydrolases"/>
    <property type="match status" value="1"/>
</dbReference>
<dbReference type="PROSITE" id="PS50929">
    <property type="entry name" value="ABC_TM1F"/>
    <property type="match status" value="1"/>
</dbReference>
<dbReference type="PROSITE" id="PS00211">
    <property type="entry name" value="ABC_TRANSPORTER_1"/>
    <property type="match status" value="1"/>
</dbReference>
<dbReference type="PROSITE" id="PS50893">
    <property type="entry name" value="ABC_TRANSPORTER_2"/>
    <property type="match status" value="1"/>
</dbReference>
<comment type="function">
    <text evidence="1">Mediates export of peptides generated upon proteolysis of mitochondrial inner membrane proteins.</text>
</comment>
<comment type="subcellular location">
    <subcellularLocation>
        <location evidence="5 6">Mitochondrion inner membrane</location>
        <topology evidence="4 5 6">Multi-pass membrane protein</topology>
    </subcellularLocation>
</comment>
<comment type="similarity">
    <text evidence="7">Belongs to the ABC transporter superfamily. ABCB family. Mitochondrial peptide exporter (TC 3.A.1.212) subfamily.</text>
</comment>
<organism>
    <name type="scientific">Schizosaccharomyces pombe (strain 972 / ATCC 24843)</name>
    <name type="common">Fission yeast</name>
    <dbReference type="NCBI Taxonomy" id="284812"/>
    <lineage>
        <taxon>Eukaryota</taxon>
        <taxon>Fungi</taxon>
        <taxon>Dikarya</taxon>
        <taxon>Ascomycota</taxon>
        <taxon>Taphrinomycotina</taxon>
        <taxon>Schizosaccharomycetes</taxon>
        <taxon>Schizosaccharomycetales</taxon>
        <taxon>Schizosaccharomycetaceae</taxon>
        <taxon>Schizosaccharomyces</taxon>
    </lineage>
</organism>
<reference key="1">
    <citation type="journal article" date="2002" name="Nature">
        <title>The genome sequence of Schizosaccharomyces pombe.</title>
        <authorList>
            <person name="Wood V."/>
            <person name="Gwilliam R."/>
            <person name="Rajandream M.A."/>
            <person name="Lyne M.H."/>
            <person name="Lyne R."/>
            <person name="Stewart A."/>
            <person name="Sgouros J.G."/>
            <person name="Peat N."/>
            <person name="Hayles J."/>
            <person name="Baker S.G."/>
            <person name="Basham D."/>
            <person name="Bowman S."/>
            <person name="Brooks K."/>
            <person name="Brown D."/>
            <person name="Brown S."/>
            <person name="Chillingworth T."/>
            <person name="Churcher C.M."/>
            <person name="Collins M."/>
            <person name="Connor R."/>
            <person name="Cronin A."/>
            <person name="Davis P."/>
            <person name="Feltwell T."/>
            <person name="Fraser A."/>
            <person name="Gentles S."/>
            <person name="Goble A."/>
            <person name="Hamlin N."/>
            <person name="Harris D.E."/>
            <person name="Hidalgo J."/>
            <person name="Hodgson G."/>
            <person name="Holroyd S."/>
            <person name="Hornsby T."/>
            <person name="Howarth S."/>
            <person name="Huckle E.J."/>
            <person name="Hunt S."/>
            <person name="Jagels K."/>
            <person name="James K.D."/>
            <person name="Jones L."/>
            <person name="Jones M."/>
            <person name="Leather S."/>
            <person name="McDonald S."/>
            <person name="McLean J."/>
            <person name="Mooney P."/>
            <person name="Moule S."/>
            <person name="Mungall K.L."/>
            <person name="Murphy L.D."/>
            <person name="Niblett D."/>
            <person name="Odell C."/>
            <person name="Oliver K."/>
            <person name="O'Neil S."/>
            <person name="Pearson D."/>
            <person name="Quail M.A."/>
            <person name="Rabbinowitsch E."/>
            <person name="Rutherford K.M."/>
            <person name="Rutter S."/>
            <person name="Saunders D."/>
            <person name="Seeger K."/>
            <person name="Sharp S."/>
            <person name="Skelton J."/>
            <person name="Simmonds M.N."/>
            <person name="Squares R."/>
            <person name="Squares S."/>
            <person name="Stevens K."/>
            <person name="Taylor K."/>
            <person name="Taylor R.G."/>
            <person name="Tivey A."/>
            <person name="Walsh S.V."/>
            <person name="Warren T."/>
            <person name="Whitehead S."/>
            <person name="Woodward J.R."/>
            <person name="Volckaert G."/>
            <person name="Aert R."/>
            <person name="Robben J."/>
            <person name="Grymonprez B."/>
            <person name="Weltjens I."/>
            <person name="Vanstreels E."/>
            <person name="Rieger M."/>
            <person name="Schaefer M."/>
            <person name="Mueller-Auer S."/>
            <person name="Gabel C."/>
            <person name="Fuchs M."/>
            <person name="Duesterhoeft A."/>
            <person name="Fritzc C."/>
            <person name="Holzer E."/>
            <person name="Moestl D."/>
            <person name="Hilbert H."/>
            <person name="Borzym K."/>
            <person name="Langer I."/>
            <person name="Beck A."/>
            <person name="Lehrach H."/>
            <person name="Reinhardt R."/>
            <person name="Pohl T.M."/>
            <person name="Eger P."/>
            <person name="Zimmermann W."/>
            <person name="Wedler H."/>
            <person name="Wambutt R."/>
            <person name="Purnelle B."/>
            <person name="Goffeau A."/>
            <person name="Cadieu E."/>
            <person name="Dreano S."/>
            <person name="Gloux S."/>
            <person name="Lelaure V."/>
            <person name="Mottier S."/>
            <person name="Galibert F."/>
            <person name="Aves S.J."/>
            <person name="Xiang Z."/>
            <person name="Hunt C."/>
            <person name="Moore K."/>
            <person name="Hurst S.M."/>
            <person name="Lucas M."/>
            <person name="Rochet M."/>
            <person name="Gaillardin C."/>
            <person name="Tallada V.A."/>
            <person name="Garzon A."/>
            <person name="Thode G."/>
            <person name="Daga R.R."/>
            <person name="Cruzado L."/>
            <person name="Jimenez J."/>
            <person name="Sanchez M."/>
            <person name="del Rey F."/>
            <person name="Benito J."/>
            <person name="Dominguez A."/>
            <person name="Revuelta J.L."/>
            <person name="Moreno S."/>
            <person name="Armstrong J."/>
            <person name="Forsburg S.L."/>
            <person name="Cerutti L."/>
            <person name="Lowe T."/>
            <person name="McCombie W.R."/>
            <person name="Paulsen I."/>
            <person name="Potashkin J."/>
            <person name="Shpakovski G.V."/>
            <person name="Ussery D."/>
            <person name="Barrell B.G."/>
            <person name="Nurse P."/>
        </authorList>
    </citation>
    <scope>NUCLEOTIDE SEQUENCE [LARGE SCALE GENOMIC DNA]</scope>
    <source>
        <strain>972 / ATCC 24843</strain>
    </source>
</reference>
<reference key="2">
    <citation type="journal article" date="2006" name="Microbiology">
        <title>A survey of all 11 ABC transporters in fission yeast: two novel ABC transporters are required for red pigment accumulation in a Schizosaccharomyces pombe adenine biosynthetic mutant.</title>
        <authorList>
            <person name="Iwaki T."/>
            <person name="Giga-Hama Y."/>
            <person name="Takegawa K."/>
        </authorList>
    </citation>
    <scope>SUBCELLULAR LOCATION</scope>
</reference>
<reference key="3">
    <citation type="journal article" date="2006" name="Nat. Biotechnol.">
        <title>ORFeome cloning and global analysis of protein localization in the fission yeast Schizosaccharomyces pombe.</title>
        <authorList>
            <person name="Matsuyama A."/>
            <person name="Arai R."/>
            <person name="Yashiroda Y."/>
            <person name="Shirai A."/>
            <person name="Kamata A."/>
            <person name="Sekido S."/>
            <person name="Kobayashi Y."/>
            <person name="Hashimoto A."/>
            <person name="Hamamoto M."/>
            <person name="Hiraoka Y."/>
            <person name="Horinouchi S."/>
            <person name="Yoshida M."/>
        </authorList>
    </citation>
    <scope>SUBCELLULAR LOCATION [LARGE SCALE ANALYSIS]</scope>
</reference>
<keyword id="KW-0067">ATP-binding</keyword>
<keyword id="KW-0325">Glycoprotein</keyword>
<keyword id="KW-0472">Membrane</keyword>
<keyword id="KW-0496">Mitochondrion</keyword>
<keyword id="KW-0999">Mitochondrion inner membrane</keyword>
<keyword id="KW-0547">Nucleotide-binding</keyword>
<keyword id="KW-1185">Reference proteome</keyword>
<keyword id="KW-0809">Transit peptide</keyword>
<keyword id="KW-0812">Transmembrane</keyword>
<keyword id="KW-1133">Transmembrane helix</keyword>
<keyword id="KW-0813">Transport</keyword>
<protein>
    <recommendedName>
        <fullName>ATP-dependent permease MDL1, mitochondrial</fullName>
    </recommendedName>
    <alternativeName>
        <fullName>ABC transporter mdl1</fullName>
    </alternativeName>
</protein>
<evidence type="ECO:0000250" key="1"/>
<evidence type="ECO:0000255" key="2"/>
<evidence type="ECO:0000255" key="3">
    <source>
        <dbReference type="PROSITE-ProRule" id="PRU00434"/>
    </source>
</evidence>
<evidence type="ECO:0000255" key="4">
    <source>
        <dbReference type="PROSITE-ProRule" id="PRU00441"/>
    </source>
</evidence>
<evidence type="ECO:0000269" key="5">
    <source>
    </source>
</evidence>
<evidence type="ECO:0000269" key="6">
    <source>
    </source>
</evidence>
<evidence type="ECO:0000305" key="7"/>
<accession>Q9Y7M7</accession>
<sequence length="726" mass="79020">MDPIRFGLSRVPFAHCYNKRVIFRANYLVPLTWLKNNVAYKSTNTLLLPTPNAEYYSTSKLSSQVNVSLNSLSQKASSGSKIYPFKNSFPLPFSRSILPIRSLAFLKLCVRHNSTVPSKDEQAQDISKINTNGTLQTPNKKVNVFRLFTLARGQGWNFFIAGSLLLVSSGVTMSIPYIVGKILDAGSSGDSSVTHIMGIPSGTFYIGLLGLFFLGSACNFGRIITLRLLSERIVSRLRARLFAKCMSLDGAFFDFHKHGDLISRLTTDSSIVGKSLSMYLSDGLRSSVSAIAGIGMMLYVSMRLTGYMSLIVPPIALGAFFYGEYVRKLSRTTQDALGDLTRVSEEKLANVRTTQAFLGERQEVNRYNDYIRNLFVLAKREAFASGIFFGSTGFLGNATVIAILALGGRMVAAGDITVGQLSSFLLYTVYAGGSIVGLSGCFTDIMKGLGAASRLFELLDAKPKIAPTVGIPVPVTVGKAILSFRNVGFAYPTRPSASIFDNLSFDIHPGTNVAIVAPSGGGKSTISQLLLRFYAPSSGKILADGVDISTYNVHQWRSHFGLVGQEPVLFSGTIGENIAYGKSNASQEEIEDAAKRANCSFVLSFPEKWSTQVGTRGLQLSGGQKQRIAIARALLRNPAFLILDEATSALDGEAEVMVDKTIQSLMHNRSMTTITIAHKLATIRRADQIIVVGDGKVLEQGSFERLSRPGTNFYKLMRWQLGKVEP</sequence>
<name>MDL1_SCHPO</name>